<accession>P67642</accession>
<accession>Q99TL0</accession>
<feature type="chain" id="PRO_0000206479" description="UPF0735 ACT domain-containing protein MW1593">
    <location>
        <begin position="1"/>
        <end position="152"/>
    </location>
</feature>
<feature type="domain" description="ACT" evidence="1">
    <location>
        <begin position="75"/>
        <end position="150"/>
    </location>
</feature>
<comment type="similarity">
    <text evidence="1">Belongs to the UPF0735 family.</text>
</comment>
<proteinExistence type="inferred from homology"/>
<evidence type="ECO:0000255" key="1">
    <source>
        <dbReference type="HAMAP-Rule" id="MF_00707"/>
    </source>
</evidence>
<sequence>MMDNKDYKKFYLIREDVLPESVVKTLKIKDALKSDPTLSIYDAVKQFDLSRSAFYKYRETIFPVDDKMLDHREFTLILYVTDIVGMLARVLDVISKLELSVLTIHQSIPMEEKATITLSLNAKSKETSVEDVIGALRNLDYVSKVELISMSM</sequence>
<reference key="1">
    <citation type="journal article" date="2002" name="Lancet">
        <title>Genome and virulence determinants of high virulence community-acquired MRSA.</title>
        <authorList>
            <person name="Baba T."/>
            <person name="Takeuchi F."/>
            <person name="Kuroda M."/>
            <person name="Yuzawa H."/>
            <person name="Aoki K."/>
            <person name="Oguchi A."/>
            <person name="Nagai Y."/>
            <person name="Iwama N."/>
            <person name="Asano K."/>
            <person name="Naimi T."/>
            <person name="Kuroda H."/>
            <person name="Cui L."/>
            <person name="Yamamoto K."/>
            <person name="Hiramatsu K."/>
        </authorList>
    </citation>
    <scope>NUCLEOTIDE SEQUENCE [LARGE SCALE GENOMIC DNA]</scope>
    <source>
        <strain>MW2</strain>
    </source>
</reference>
<organism>
    <name type="scientific">Staphylococcus aureus (strain MW2)</name>
    <dbReference type="NCBI Taxonomy" id="196620"/>
    <lineage>
        <taxon>Bacteria</taxon>
        <taxon>Bacillati</taxon>
        <taxon>Bacillota</taxon>
        <taxon>Bacilli</taxon>
        <taxon>Bacillales</taxon>
        <taxon>Staphylococcaceae</taxon>
        <taxon>Staphylococcus</taxon>
    </lineage>
</organism>
<name>Y1593_STAAW</name>
<dbReference type="EMBL" id="BA000033">
    <property type="protein sequence ID" value="BAB95458.1"/>
    <property type="molecule type" value="Genomic_DNA"/>
</dbReference>
<dbReference type="KEGG" id="sam:MW1593"/>
<dbReference type="HOGENOM" id="CLU_128147_0_0_9"/>
<dbReference type="Gene3D" id="3.30.70.260">
    <property type="match status" value="1"/>
</dbReference>
<dbReference type="HAMAP" id="MF_00707">
    <property type="entry name" value="UPF0735"/>
    <property type="match status" value="1"/>
</dbReference>
<dbReference type="InterPro" id="IPR045865">
    <property type="entry name" value="ACT-like_dom_sf"/>
</dbReference>
<dbReference type="InterPro" id="IPR002912">
    <property type="entry name" value="ACT_dom"/>
</dbReference>
<dbReference type="InterPro" id="IPR008310">
    <property type="entry name" value="UPF0735_ACT_dom-cont"/>
</dbReference>
<dbReference type="NCBIfam" id="NF003361">
    <property type="entry name" value="PRK04435.1"/>
    <property type="match status" value="1"/>
</dbReference>
<dbReference type="PIRSF" id="PIRSF025624">
    <property type="entry name" value="ACT_PheB"/>
    <property type="match status" value="1"/>
</dbReference>
<dbReference type="SUPFAM" id="SSF55021">
    <property type="entry name" value="ACT-like"/>
    <property type="match status" value="1"/>
</dbReference>
<dbReference type="PROSITE" id="PS51671">
    <property type="entry name" value="ACT"/>
    <property type="match status" value="1"/>
</dbReference>
<protein>
    <recommendedName>
        <fullName evidence="1">UPF0735 ACT domain-containing protein MW1593</fullName>
    </recommendedName>
</protein>
<gene>
    <name type="ordered locus">MW1593</name>
</gene>